<dbReference type="EMBL" id="AE017262">
    <property type="protein sequence ID" value="AAT03864.1"/>
    <property type="molecule type" value="Genomic_DNA"/>
</dbReference>
<dbReference type="RefSeq" id="WP_003725573.1">
    <property type="nucleotide sequence ID" value="NC_002973.6"/>
</dbReference>
<dbReference type="SMR" id="Q721A0"/>
<dbReference type="KEGG" id="lmf:LMOf2365_1087"/>
<dbReference type="HOGENOM" id="CLU_160493_1_0_9"/>
<dbReference type="Gene3D" id="1.10.287.750">
    <property type="entry name" value="SO2669-like"/>
    <property type="match status" value="1"/>
</dbReference>
<dbReference type="HAMAP" id="MF_01560">
    <property type="entry name" value="UPF0358"/>
    <property type="match status" value="1"/>
</dbReference>
<dbReference type="InterPro" id="IPR009983">
    <property type="entry name" value="UPF0358"/>
</dbReference>
<dbReference type="InterPro" id="IPR036270">
    <property type="entry name" value="UPF0358_sf"/>
</dbReference>
<dbReference type="NCBIfam" id="NF010187">
    <property type="entry name" value="PRK13666.1"/>
    <property type="match status" value="1"/>
</dbReference>
<dbReference type="Pfam" id="PF07408">
    <property type="entry name" value="DUF1507"/>
    <property type="match status" value="1"/>
</dbReference>
<dbReference type="SUPFAM" id="SSF140404">
    <property type="entry name" value="EF2458-like"/>
    <property type="match status" value="1"/>
</dbReference>
<comment type="similarity">
    <text evidence="1">Belongs to the UPF0358 family.</text>
</comment>
<protein>
    <recommendedName>
        <fullName evidence="1">UPF0358 protein LMOf2365_1087</fullName>
    </recommendedName>
</protein>
<proteinExistence type="inferred from homology"/>
<gene>
    <name type="ordered locus">LMOf2365_1087</name>
</gene>
<feature type="chain" id="PRO_0000110649" description="UPF0358 protein LMOf2365_1087">
    <location>
        <begin position="1"/>
        <end position="93"/>
    </location>
</feature>
<evidence type="ECO:0000255" key="1">
    <source>
        <dbReference type="HAMAP-Rule" id="MF_01560"/>
    </source>
</evidence>
<reference key="1">
    <citation type="journal article" date="2004" name="Nucleic Acids Res.">
        <title>Whole genome comparisons of serotype 4b and 1/2a strains of the food-borne pathogen Listeria monocytogenes reveal new insights into the core genome components of this species.</title>
        <authorList>
            <person name="Nelson K.E."/>
            <person name="Fouts D.E."/>
            <person name="Mongodin E.F."/>
            <person name="Ravel J."/>
            <person name="DeBoy R.T."/>
            <person name="Kolonay J.F."/>
            <person name="Rasko D.A."/>
            <person name="Angiuoli S.V."/>
            <person name="Gill S.R."/>
            <person name="Paulsen I.T."/>
            <person name="Peterson J.D."/>
            <person name="White O."/>
            <person name="Nelson W.C."/>
            <person name="Nierman W.C."/>
            <person name="Beanan M.J."/>
            <person name="Brinkac L.M."/>
            <person name="Daugherty S.C."/>
            <person name="Dodson R.J."/>
            <person name="Durkin A.S."/>
            <person name="Madupu R."/>
            <person name="Haft D.H."/>
            <person name="Selengut J."/>
            <person name="Van Aken S.E."/>
            <person name="Khouri H.M."/>
            <person name="Fedorova N."/>
            <person name="Forberger H.A."/>
            <person name="Tran B."/>
            <person name="Kathariou S."/>
            <person name="Wonderling L.D."/>
            <person name="Uhlich G.A."/>
            <person name="Bayles D.O."/>
            <person name="Luchansky J.B."/>
            <person name="Fraser C.M."/>
        </authorList>
    </citation>
    <scope>NUCLEOTIDE SEQUENCE [LARGE SCALE GENOMIC DNA]</scope>
    <source>
        <strain>F2365</strain>
    </source>
</reference>
<accession>Q721A0</accession>
<sequence length="93" mass="10744">MANKKIDHREEAVELLKQDAKRILQLIKVQMDNLTLPQCPAYEEVLDTQMYGLSREINFATRLGLIEPEEGKKLMSTLEKELSTLHELSMSKK</sequence>
<organism>
    <name type="scientific">Listeria monocytogenes serotype 4b (strain F2365)</name>
    <dbReference type="NCBI Taxonomy" id="265669"/>
    <lineage>
        <taxon>Bacteria</taxon>
        <taxon>Bacillati</taxon>
        <taxon>Bacillota</taxon>
        <taxon>Bacilli</taxon>
        <taxon>Bacillales</taxon>
        <taxon>Listeriaceae</taxon>
        <taxon>Listeria</taxon>
    </lineage>
</organism>
<name>Y1087_LISMF</name>